<comment type="similarity">
    <text evidence="1">Belongs to the UPF0173 family.</text>
</comment>
<accession>Q5WEE4</accession>
<protein>
    <recommendedName>
        <fullName evidence="1">UPF0173 metal-dependent hydrolase ABC2731</fullName>
    </recommendedName>
</protein>
<sequence length="228" mass="24627">MKVSYHGHSVVQIETGGKTILIDPFITGNELTDLNADHVEADVILLTHGHNDHVGDTVAIAKRTGALVVAVAELATYMGFQGVENVHPMSIGGAYQFDFGRVKFTQAFHGSSFTEEDSQKIVYTGMPGGILFTAEGKTIYHAGDTALFSDMKLIGERHPIDLAFLPIGDNFTMGPEDAKTATEWIGASLTVPIHYNTFPPIKQDPHAFVTSLQSGEGRVLEVGETIEL</sequence>
<keyword id="KW-0378">Hydrolase</keyword>
<keyword id="KW-1185">Reference proteome</keyword>
<gene>
    <name type="ordered locus">ABC2731</name>
</gene>
<evidence type="ECO:0000255" key="1">
    <source>
        <dbReference type="HAMAP-Rule" id="MF_00457"/>
    </source>
</evidence>
<feature type="chain" id="PRO_0000156370" description="UPF0173 metal-dependent hydrolase ABC2731">
    <location>
        <begin position="1"/>
        <end position="228"/>
    </location>
</feature>
<reference key="1">
    <citation type="submission" date="2003-10" db="EMBL/GenBank/DDBJ databases">
        <title>The complete genome sequence of the alkaliphilic Bacillus clausii KSM-K16.</title>
        <authorList>
            <person name="Takaki Y."/>
            <person name="Kageyama Y."/>
            <person name="Shimamura S."/>
            <person name="Suzuki H."/>
            <person name="Nishi S."/>
            <person name="Hatada Y."/>
            <person name="Kawai S."/>
            <person name="Ito S."/>
            <person name="Horikoshi K."/>
        </authorList>
    </citation>
    <scope>NUCLEOTIDE SEQUENCE [LARGE SCALE GENOMIC DNA]</scope>
    <source>
        <strain>KSM-K16</strain>
    </source>
</reference>
<organism>
    <name type="scientific">Shouchella clausii (strain KSM-K16)</name>
    <name type="common">Alkalihalobacillus clausii</name>
    <dbReference type="NCBI Taxonomy" id="66692"/>
    <lineage>
        <taxon>Bacteria</taxon>
        <taxon>Bacillati</taxon>
        <taxon>Bacillota</taxon>
        <taxon>Bacilli</taxon>
        <taxon>Bacillales</taxon>
        <taxon>Bacillaceae</taxon>
        <taxon>Shouchella</taxon>
    </lineage>
</organism>
<name>Y2731_SHOC1</name>
<proteinExistence type="inferred from homology"/>
<dbReference type="EMBL" id="AP006627">
    <property type="protein sequence ID" value="BAD65266.1"/>
    <property type="molecule type" value="Genomic_DNA"/>
</dbReference>
<dbReference type="RefSeq" id="WP_011247574.1">
    <property type="nucleotide sequence ID" value="NC_006582.1"/>
</dbReference>
<dbReference type="SMR" id="Q5WEE4"/>
<dbReference type="STRING" id="66692.ABC2731"/>
<dbReference type="KEGG" id="bcl:ABC2731"/>
<dbReference type="eggNOG" id="COG2220">
    <property type="taxonomic scope" value="Bacteria"/>
</dbReference>
<dbReference type="HOGENOM" id="CLU_070010_4_1_9"/>
<dbReference type="OrthoDB" id="9789133at2"/>
<dbReference type="Proteomes" id="UP000001168">
    <property type="component" value="Chromosome"/>
</dbReference>
<dbReference type="GO" id="GO:0016787">
    <property type="term" value="F:hydrolase activity"/>
    <property type="evidence" value="ECO:0007669"/>
    <property type="project" value="UniProtKB-UniRule"/>
</dbReference>
<dbReference type="Gene3D" id="3.60.15.10">
    <property type="entry name" value="Ribonuclease Z/Hydroxyacylglutathione hydrolase-like"/>
    <property type="match status" value="1"/>
</dbReference>
<dbReference type="HAMAP" id="MF_00457">
    <property type="entry name" value="UPF0173"/>
    <property type="match status" value="1"/>
</dbReference>
<dbReference type="InterPro" id="IPR001279">
    <property type="entry name" value="Metallo-B-lactamas"/>
</dbReference>
<dbReference type="InterPro" id="IPR036866">
    <property type="entry name" value="RibonucZ/Hydroxyglut_hydro"/>
</dbReference>
<dbReference type="InterPro" id="IPR022877">
    <property type="entry name" value="UPF0173"/>
</dbReference>
<dbReference type="InterPro" id="IPR050114">
    <property type="entry name" value="UPF0173_UPF0282_UlaG_hydrolase"/>
</dbReference>
<dbReference type="NCBIfam" id="NF001911">
    <property type="entry name" value="PRK00685.1"/>
    <property type="match status" value="1"/>
</dbReference>
<dbReference type="PANTHER" id="PTHR43546:SF3">
    <property type="entry name" value="UPF0173 METAL-DEPENDENT HYDROLASE MJ1163"/>
    <property type="match status" value="1"/>
</dbReference>
<dbReference type="PANTHER" id="PTHR43546">
    <property type="entry name" value="UPF0173 METAL-DEPENDENT HYDROLASE MJ1163-RELATED"/>
    <property type="match status" value="1"/>
</dbReference>
<dbReference type="Pfam" id="PF12706">
    <property type="entry name" value="Lactamase_B_2"/>
    <property type="match status" value="1"/>
</dbReference>
<dbReference type="SMART" id="SM00849">
    <property type="entry name" value="Lactamase_B"/>
    <property type="match status" value="1"/>
</dbReference>
<dbReference type="SUPFAM" id="SSF56281">
    <property type="entry name" value="Metallo-hydrolase/oxidoreductase"/>
    <property type="match status" value="1"/>
</dbReference>